<protein>
    <recommendedName>
        <fullName evidence="1">Nucleoside diphosphate kinase</fullName>
        <shortName evidence="1">NDK</shortName>
        <shortName evidence="1">NDP kinase</shortName>
        <ecNumber evidence="1">2.7.4.6</ecNumber>
    </recommendedName>
    <alternativeName>
        <fullName evidence="1">Nucleoside-2-P kinase</fullName>
    </alternativeName>
</protein>
<feature type="chain" id="PRO_1000026252" description="Nucleoside diphosphate kinase">
    <location>
        <begin position="1"/>
        <end position="141"/>
    </location>
</feature>
<feature type="active site" description="Pros-phosphohistidine intermediate" evidence="1">
    <location>
        <position position="117"/>
    </location>
</feature>
<feature type="binding site" evidence="1">
    <location>
        <position position="11"/>
    </location>
    <ligand>
        <name>ATP</name>
        <dbReference type="ChEBI" id="CHEBI:30616"/>
    </ligand>
</feature>
<feature type="binding site" evidence="1">
    <location>
        <position position="59"/>
    </location>
    <ligand>
        <name>ATP</name>
        <dbReference type="ChEBI" id="CHEBI:30616"/>
    </ligand>
</feature>
<feature type="binding site" evidence="1">
    <location>
        <position position="87"/>
    </location>
    <ligand>
        <name>ATP</name>
        <dbReference type="ChEBI" id="CHEBI:30616"/>
    </ligand>
</feature>
<feature type="binding site" evidence="1">
    <location>
        <position position="93"/>
    </location>
    <ligand>
        <name>ATP</name>
        <dbReference type="ChEBI" id="CHEBI:30616"/>
    </ligand>
</feature>
<feature type="binding site" evidence="1">
    <location>
        <position position="104"/>
    </location>
    <ligand>
        <name>ATP</name>
        <dbReference type="ChEBI" id="CHEBI:30616"/>
    </ligand>
</feature>
<feature type="binding site" evidence="1">
    <location>
        <position position="114"/>
    </location>
    <ligand>
        <name>ATP</name>
        <dbReference type="ChEBI" id="CHEBI:30616"/>
    </ligand>
</feature>
<name>NDK_METPP</name>
<keyword id="KW-0067">ATP-binding</keyword>
<keyword id="KW-0963">Cytoplasm</keyword>
<keyword id="KW-0418">Kinase</keyword>
<keyword id="KW-0460">Magnesium</keyword>
<keyword id="KW-0479">Metal-binding</keyword>
<keyword id="KW-0546">Nucleotide metabolism</keyword>
<keyword id="KW-0547">Nucleotide-binding</keyword>
<keyword id="KW-0597">Phosphoprotein</keyword>
<keyword id="KW-1185">Reference proteome</keyword>
<keyword id="KW-0808">Transferase</keyword>
<accession>A2SHB9</accession>
<proteinExistence type="inferred from homology"/>
<sequence>MAIERTLSIIKPDAVAKNVIGQIYARFEGAGLKIVAAKLVHLSRGEAEQFYAVHKARPFFKDLVEFMISGPVMIQALEGEGAIAKNRELMGATDPKKAEKGTIRADFADSIDANAVHGSDAPETAAVEVAFFFPGMNVYSR</sequence>
<gene>
    <name evidence="1" type="primary">ndk</name>
    <name type="ordered locus">Mpe_A2000</name>
</gene>
<organism>
    <name type="scientific">Methylibium petroleiphilum (strain ATCC BAA-1232 / LMG 22953 / PM1)</name>
    <dbReference type="NCBI Taxonomy" id="420662"/>
    <lineage>
        <taxon>Bacteria</taxon>
        <taxon>Pseudomonadati</taxon>
        <taxon>Pseudomonadota</taxon>
        <taxon>Betaproteobacteria</taxon>
        <taxon>Burkholderiales</taxon>
        <taxon>Sphaerotilaceae</taxon>
        <taxon>Methylibium</taxon>
    </lineage>
</organism>
<evidence type="ECO:0000255" key="1">
    <source>
        <dbReference type="HAMAP-Rule" id="MF_00451"/>
    </source>
</evidence>
<comment type="function">
    <text evidence="1">Major role in the synthesis of nucleoside triphosphates other than ATP. The ATP gamma phosphate is transferred to the NDP beta phosphate via a ping-pong mechanism, using a phosphorylated active-site intermediate.</text>
</comment>
<comment type="catalytic activity">
    <reaction evidence="1">
        <text>a 2'-deoxyribonucleoside 5'-diphosphate + ATP = a 2'-deoxyribonucleoside 5'-triphosphate + ADP</text>
        <dbReference type="Rhea" id="RHEA:44640"/>
        <dbReference type="ChEBI" id="CHEBI:30616"/>
        <dbReference type="ChEBI" id="CHEBI:61560"/>
        <dbReference type="ChEBI" id="CHEBI:73316"/>
        <dbReference type="ChEBI" id="CHEBI:456216"/>
        <dbReference type="EC" id="2.7.4.6"/>
    </reaction>
</comment>
<comment type="catalytic activity">
    <reaction evidence="1">
        <text>a ribonucleoside 5'-diphosphate + ATP = a ribonucleoside 5'-triphosphate + ADP</text>
        <dbReference type="Rhea" id="RHEA:18113"/>
        <dbReference type="ChEBI" id="CHEBI:30616"/>
        <dbReference type="ChEBI" id="CHEBI:57930"/>
        <dbReference type="ChEBI" id="CHEBI:61557"/>
        <dbReference type="ChEBI" id="CHEBI:456216"/>
        <dbReference type="EC" id="2.7.4.6"/>
    </reaction>
</comment>
<comment type="cofactor">
    <cofactor evidence="1">
        <name>Mg(2+)</name>
        <dbReference type="ChEBI" id="CHEBI:18420"/>
    </cofactor>
</comment>
<comment type="subunit">
    <text evidence="1">Homotetramer.</text>
</comment>
<comment type="subcellular location">
    <subcellularLocation>
        <location evidence="1">Cytoplasm</location>
    </subcellularLocation>
</comment>
<comment type="similarity">
    <text evidence="1">Belongs to the NDK family.</text>
</comment>
<dbReference type="EC" id="2.7.4.6" evidence="1"/>
<dbReference type="EMBL" id="CP000555">
    <property type="protein sequence ID" value="ABM94958.1"/>
    <property type="molecule type" value="Genomic_DNA"/>
</dbReference>
<dbReference type="RefSeq" id="WP_011829595.1">
    <property type="nucleotide sequence ID" value="NC_008825.1"/>
</dbReference>
<dbReference type="SMR" id="A2SHB9"/>
<dbReference type="STRING" id="420662.Mpe_A2000"/>
<dbReference type="KEGG" id="mpt:Mpe_A2000"/>
<dbReference type="eggNOG" id="COG0105">
    <property type="taxonomic scope" value="Bacteria"/>
</dbReference>
<dbReference type="HOGENOM" id="CLU_060216_8_1_4"/>
<dbReference type="Proteomes" id="UP000000366">
    <property type="component" value="Chromosome"/>
</dbReference>
<dbReference type="GO" id="GO:0005737">
    <property type="term" value="C:cytoplasm"/>
    <property type="evidence" value="ECO:0007669"/>
    <property type="project" value="UniProtKB-SubCell"/>
</dbReference>
<dbReference type="GO" id="GO:0005524">
    <property type="term" value="F:ATP binding"/>
    <property type="evidence" value="ECO:0007669"/>
    <property type="project" value="UniProtKB-UniRule"/>
</dbReference>
<dbReference type="GO" id="GO:0046872">
    <property type="term" value="F:metal ion binding"/>
    <property type="evidence" value="ECO:0007669"/>
    <property type="project" value="UniProtKB-KW"/>
</dbReference>
<dbReference type="GO" id="GO:0004550">
    <property type="term" value="F:nucleoside diphosphate kinase activity"/>
    <property type="evidence" value="ECO:0007669"/>
    <property type="project" value="UniProtKB-UniRule"/>
</dbReference>
<dbReference type="GO" id="GO:0006241">
    <property type="term" value="P:CTP biosynthetic process"/>
    <property type="evidence" value="ECO:0007669"/>
    <property type="project" value="UniProtKB-UniRule"/>
</dbReference>
<dbReference type="GO" id="GO:0006183">
    <property type="term" value="P:GTP biosynthetic process"/>
    <property type="evidence" value="ECO:0007669"/>
    <property type="project" value="UniProtKB-UniRule"/>
</dbReference>
<dbReference type="GO" id="GO:0006228">
    <property type="term" value="P:UTP biosynthetic process"/>
    <property type="evidence" value="ECO:0007669"/>
    <property type="project" value="UniProtKB-UniRule"/>
</dbReference>
<dbReference type="CDD" id="cd04413">
    <property type="entry name" value="NDPk_I"/>
    <property type="match status" value="1"/>
</dbReference>
<dbReference type="FunFam" id="3.30.70.141:FF:000001">
    <property type="entry name" value="Nucleoside diphosphate kinase"/>
    <property type="match status" value="1"/>
</dbReference>
<dbReference type="Gene3D" id="3.30.70.141">
    <property type="entry name" value="Nucleoside diphosphate kinase-like domain"/>
    <property type="match status" value="1"/>
</dbReference>
<dbReference type="HAMAP" id="MF_00451">
    <property type="entry name" value="NDP_kinase"/>
    <property type="match status" value="1"/>
</dbReference>
<dbReference type="InterPro" id="IPR034907">
    <property type="entry name" value="NDK-like_dom"/>
</dbReference>
<dbReference type="InterPro" id="IPR036850">
    <property type="entry name" value="NDK-like_dom_sf"/>
</dbReference>
<dbReference type="InterPro" id="IPR001564">
    <property type="entry name" value="Nucleoside_diP_kinase"/>
</dbReference>
<dbReference type="InterPro" id="IPR023005">
    <property type="entry name" value="Nucleoside_diP_kinase_AS"/>
</dbReference>
<dbReference type="NCBIfam" id="NF001908">
    <property type="entry name" value="PRK00668.1"/>
    <property type="match status" value="1"/>
</dbReference>
<dbReference type="PANTHER" id="PTHR46161">
    <property type="entry name" value="NUCLEOSIDE DIPHOSPHATE KINASE"/>
    <property type="match status" value="1"/>
</dbReference>
<dbReference type="PANTHER" id="PTHR46161:SF3">
    <property type="entry name" value="NUCLEOSIDE DIPHOSPHATE KINASE DDB_G0292928-RELATED"/>
    <property type="match status" value="1"/>
</dbReference>
<dbReference type="Pfam" id="PF00334">
    <property type="entry name" value="NDK"/>
    <property type="match status" value="1"/>
</dbReference>
<dbReference type="PRINTS" id="PR01243">
    <property type="entry name" value="NUCDPKINASE"/>
</dbReference>
<dbReference type="SMART" id="SM00562">
    <property type="entry name" value="NDK"/>
    <property type="match status" value="1"/>
</dbReference>
<dbReference type="SUPFAM" id="SSF54919">
    <property type="entry name" value="Nucleoside diphosphate kinase, NDK"/>
    <property type="match status" value="1"/>
</dbReference>
<dbReference type="PROSITE" id="PS00469">
    <property type="entry name" value="NDPK"/>
    <property type="match status" value="1"/>
</dbReference>
<dbReference type="PROSITE" id="PS51374">
    <property type="entry name" value="NDPK_LIKE"/>
    <property type="match status" value="1"/>
</dbReference>
<reference key="1">
    <citation type="journal article" date="2007" name="J. Bacteriol.">
        <title>Whole-genome analysis of the methyl tert-butyl ether-degrading beta-proteobacterium Methylibium petroleiphilum PM1.</title>
        <authorList>
            <person name="Kane S.R."/>
            <person name="Chakicherla A.Y."/>
            <person name="Chain P.S.G."/>
            <person name="Schmidt R."/>
            <person name="Shin M.W."/>
            <person name="Legler T.C."/>
            <person name="Scow K.M."/>
            <person name="Larimer F.W."/>
            <person name="Lucas S.M."/>
            <person name="Richardson P.M."/>
            <person name="Hristova K.R."/>
        </authorList>
    </citation>
    <scope>NUCLEOTIDE SEQUENCE [LARGE SCALE GENOMIC DNA]</scope>
    <source>
        <strain>ATCC BAA-1232 / LMG 22953 / PM1</strain>
    </source>
</reference>